<reference key="1">
    <citation type="journal article" date="2014" name="PLoS ONE">
        <title>Cloning and characterization of a norbelladine 4'-O-methyltransferase involved in the biosynthesis of the Alzheimer's drug galanthamine in Narcissus sp. aff. pseudonarcissus.</title>
        <authorList>
            <person name="Kilgore M.B."/>
            <person name="Augustin M.M."/>
            <person name="Starks C.M."/>
            <person name="O'Neil-Johnson M."/>
            <person name="May G.D."/>
            <person name="Crow J.A."/>
            <person name="Kutchan T.M."/>
        </authorList>
    </citation>
    <scope>NUCLEOTIDE SEQUENCE [MRNA]</scope>
    <source>
        <strain>cv. Carlton</strain>
        <tissue>Bulb</tissue>
    </source>
</reference>
<organism>
    <name type="scientific">Narcissus aff. pseudonarcissus MK-2014</name>
    <name type="common">Daffodil</name>
    <dbReference type="NCBI Taxonomy" id="1540222"/>
    <lineage>
        <taxon>Eukaryota</taxon>
        <taxon>Viridiplantae</taxon>
        <taxon>Streptophyta</taxon>
        <taxon>Embryophyta</taxon>
        <taxon>Tracheophyta</taxon>
        <taxon>Spermatophyta</taxon>
        <taxon>Magnoliopsida</taxon>
        <taxon>Liliopsida</taxon>
        <taxon>Asparagales</taxon>
        <taxon>Amaryllidaceae</taxon>
        <taxon>Amaryllidoideae</taxon>
        <taxon>Narcissus</taxon>
    </lineage>
</organism>
<dbReference type="EC" id="2.1.1.336" evidence="1"/>
<dbReference type="EMBL" id="KJ584564">
    <property type="protein sequence ID" value="AIL54544.1"/>
    <property type="molecule type" value="mRNA"/>
</dbReference>
<dbReference type="SMR" id="A0A077ES70"/>
<dbReference type="GO" id="GO:0046872">
    <property type="term" value="F:metal ion binding"/>
    <property type="evidence" value="ECO:0007669"/>
    <property type="project" value="UniProtKB-KW"/>
</dbReference>
<dbReference type="GO" id="GO:0008171">
    <property type="term" value="F:O-methyltransferase activity"/>
    <property type="evidence" value="ECO:0007669"/>
    <property type="project" value="InterPro"/>
</dbReference>
<dbReference type="GO" id="GO:0008757">
    <property type="term" value="F:S-adenosylmethionine-dependent methyltransferase activity"/>
    <property type="evidence" value="ECO:0007669"/>
    <property type="project" value="TreeGrafter"/>
</dbReference>
<dbReference type="GO" id="GO:0009820">
    <property type="term" value="P:alkaloid metabolic process"/>
    <property type="evidence" value="ECO:0007669"/>
    <property type="project" value="UniProtKB-KW"/>
</dbReference>
<dbReference type="GO" id="GO:0032259">
    <property type="term" value="P:methylation"/>
    <property type="evidence" value="ECO:0007669"/>
    <property type="project" value="UniProtKB-KW"/>
</dbReference>
<dbReference type="Gene3D" id="3.40.50.150">
    <property type="entry name" value="Vaccinia Virus protein VP39"/>
    <property type="match status" value="1"/>
</dbReference>
<dbReference type="InterPro" id="IPR050362">
    <property type="entry name" value="Cation-dep_OMT"/>
</dbReference>
<dbReference type="InterPro" id="IPR029063">
    <property type="entry name" value="SAM-dependent_MTases_sf"/>
</dbReference>
<dbReference type="InterPro" id="IPR002935">
    <property type="entry name" value="SAM_O-MeTrfase"/>
</dbReference>
<dbReference type="PANTHER" id="PTHR10509">
    <property type="entry name" value="O-METHYLTRANSFERASE-RELATED"/>
    <property type="match status" value="1"/>
</dbReference>
<dbReference type="PANTHER" id="PTHR10509:SF34">
    <property type="entry name" value="TAPETUM-SPECIFIC METHYLTRANSFERASE 1"/>
    <property type="match status" value="1"/>
</dbReference>
<dbReference type="Pfam" id="PF01596">
    <property type="entry name" value="Methyltransf_3"/>
    <property type="match status" value="1"/>
</dbReference>
<dbReference type="SUPFAM" id="SSF53335">
    <property type="entry name" value="S-adenosyl-L-methionine-dependent methyltransferases"/>
    <property type="match status" value="1"/>
</dbReference>
<dbReference type="PROSITE" id="PS51682">
    <property type="entry name" value="SAM_OMT_I"/>
    <property type="match status" value="1"/>
</dbReference>
<proteinExistence type="evidence at transcript level"/>
<name>NOMT4_NARAP</name>
<gene>
    <name evidence="4" type="primary">N4OMT4</name>
</gene>
<protein>
    <recommendedName>
        <fullName evidence="4">Norbelladine 4'-O-methyltransferase 4</fullName>
        <shortName evidence="4">NpN4OMT4</shortName>
        <ecNumber evidence="1">2.1.1.336</ecNumber>
    </recommendedName>
</protein>
<sequence length="239" mass="27137">MGASIDDYCLIHKKILHSEDLLKYILETSAYPREHEQLKGLREVTEKHEWSSALVPADEGLFLSMLIKLMNAKRTIEIGVYTGYSLLTTALALPEDGKITAIDVNKSFFEIGLPFIQKAGVEHKINFIESEALPVLDQMLQETKEEDLYDYAFVDADKSNYANYHERLVKLVRIGGAILYDNTLWYGSVAYPEYPGLHPEEEVARLSFRNLNTFLAADPRVEISQVSIGDGVTICRRLY</sequence>
<comment type="function">
    <text evidence="1 2">4'-O-methyltransferase converting norbelladine to 4'-O-methylnorbelladine (By similarity). 4'-O-methylnorbelladine is a precursor to all Amaryllidaceae alkaloids such as galanthamine, lycorine and haemanthamine, and including haemanthamine- and crinamine-type alkaloids, promising anticancer agents (By similarity).</text>
</comment>
<comment type="catalytic activity">
    <reaction evidence="1">
        <text>norbelladine + S-adenosyl-L-methionine = 4'-O-methylnorbelladine + S-adenosyl-L-homocysteine + H(+)</text>
        <dbReference type="Rhea" id="RHEA:51268"/>
        <dbReference type="ChEBI" id="CHEBI:15378"/>
        <dbReference type="ChEBI" id="CHEBI:57856"/>
        <dbReference type="ChEBI" id="CHEBI:59789"/>
        <dbReference type="ChEBI" id="CHEBI:133993"/>
        <dbReference type="ChEBI" id="CHEBI:134001"/>
        <dbReference type="EC" id="2.1.1.336"/>
    </reaction>
</comment>
<comment type="cofactor">
    <cofactor evidence="1">
        <name>Mg(2+)</name>
        <dbReference type="ChEBI" id="CHEBI:18420"/>
    </cofactor>
</comment>
<comment type="pathway">
    <text evidence="1">Alkaloid biosynthesis.</text>
</comment>
<comment type="similarity">
    <text evidence="5">Belongs to the class I-like SAM-binding methyltransferase superfamily. Cation-dependent O-methyltransferase family.</text>
</comment>
<evidence type="ECO:0000250" key="1">
    <source>
        <dbReference type="UniProtKB" id="A0A077EWA5"/>
    </source>
</evidence>
<evidence type="ECO:0000250" key="2">
    <source>
        <dbReference type="UniProtKB" id="A0A2H5AIZ6"/>
    </source>
</evidence>
<evidence type="ECO:0000255" key="3">
    <source>
        <dbReference type="PROSITE-ProRule" id="PRU01019"/>
    </source>
</evidence>
<evidence type="ECO:0000303" key="4">
    <source>
    </source>
</evidence>
<evidence type="ECO:0000305" key="5"/>
<keyword id="KW-0017">Alkaloid metabolism</keyword>
<keyword id="KW-0479">Metal-binding</keyword>
<keyword id="KW-0489">Methyltransferase</keyword>
<keyword id="KW-0949">S-adenosyl-L-methionine</keyword>
<keyword id="KW-0808">Transferase</keyword>
<accession>A0A077ES70</accession>
<feature type="chain" id="PRO_0000450644" description="Norbelladine 4'-O-methyltransferase 4">
    <location>
        <begin position="1"/>
        <end position="239"/>
    </location>
</feature>
<feature type="binding site" evidence="3">
    <location>
        <position position="55"/>
    </location>
    <ligand>
        <name>S-adenosyl-L-methionine</name>
        <dbReference type="ChEBI" id="CHEBI:59789"/>
    </ligand>
</feature>
<feature type="binding site" evidence="3">
    <location>
        <position position="77"/>
    </location>
    <ligand>
        <name>S-adenosyl-L-methionine</name>
        <dbReference type="ChEBI" id="CHEBI:59789"/>
    </ligand>
</feature>
<feature type="binding site" evidence="3">
    <location>
        <begin position="79"/>
        <end position="80"/>
    </location>
    <ligand>
        <name>S-adenosyl-L-methionine</name>
        <dbReference type="ChEBI" id="CHEBI:59789"/>
    </ligand>
</feature>
<feature type="binding site" evidence="3">
    <location>
        <position position="85"/>
    </location>
    <ligand>
        <name>S-adenosyl-L-methionine</name>
        <dbReference type="ChEBI" id="CHEBI:59789"/>
    </ligand>
</feature>
<feature type="binding site" evidence="3">
    <location>
        <position position="103"/>
    </location>
    <ligand>
        <name>S-adenosyl-L-methionine</name>
        <dbReference type="ChEBI" id="CHEBI:59789"/>
    </ligand>
</feature>
<feature type="binding site" evidence="3">
    <location>
        <position position="132"/>
    </location>
    <ligand>
        <name>S-adenosyl-L-methionine</name>
        <dbReference type="ChEBI" id="CHEBI:59789"/>
    </ligand>
</feature>
<feature type="binding site" evidence="3">
    <location>
        <position position="155"/>
    </location>
    <ligand>
        <name>a divalent metal cation</name>
        <dbReference type="ChEBI" id="CHEBI:60240"/>
    </ligand>
</feature>
<feature type="binding site" evidence="3">
    <location>
        <position position="157"/>
    </location>
    <ligand>
        <name>S-adenosyl-L-methionine</name>
        <dbReference type="ChEBI" id="CHEBI:59789"/>
    </ligand>
</feature>
<feature type="binding site" evidence="3">
    <location>
        <position position="181"/>
    </location>
    <ligand>
        <name>a divalent metal cation</name>
        <dbReference type="ChEBI" id="CHEBI:60240"/>
    </ligand>
</feature>
<feature type="binding site" evidence="3">
    <location>
        <position position="182"/>
    </location>
    <ligand>
        <name>a divalent metal cation</name>
        <dbReference type="ChEBI" id="CHEBI:60240"/>
    </ligand>
</feature>